<protein>
    <recommendedName>
        <fullName evidence="1">tRNA-cytidine(32) 2-sulfurtransferase</fullName>
        <ecNumber evidence="1">2.8.1.-</ecNumber>
    </recommendedName>
    <alternativeName>
        <fullName evidence="1">Two-thiocytidine biosynthesis protein A</fullName>
    </alternativeName>
    <alternativeName>
        <fullName evidence="1">tRNA 2-thiocytidine biosynthesis protein TtcA</fullName>
    </alternativeName>
</protein>
<name>TTCA_CROS8</name>
<dbReference type="EC" id="2.8.1.-" evidence="1"/>
<dbReference type="EMBL" id="CP000783">
    <property type="protein sequence ID" value="ABU76929.1"/>
    <property type="molecule type" value="Genomic_DNA"/>
</dbReference>
<dbReference type="RefSeq" id="WP_012124649.1">
    <property type="nucleotide sequence ID" value="NC_009778.1"/>
</dbReference>
<dbReference type="SMR" id="A7MLI7"/>
<dbReference type="KEGG" id="esa:ESA_01675"/>
<dbReference type="PATRIC" id="fig|290339.8.peg.1485"/>
<dbReference type="HOGENOM" id="CLU_026481_0_0_6"/>
<dbReference type="Proteomes" id="UP000000260">
    <property type="component" value="Chromosome"/>
</dbReference>
<dbReference type="GO" id="GO:0005737">
    <property type="term" value="C:cytoplasm"/>
    <property type="evidence" value="ECO:0007669"/>
    <property type="project" value="UniProtKB-SubCell"/>
</dbReference>
<dbReference type="GO" id="GO:0051539">
    <property type="term" value="F:4 iron, 4 sulfur cluster binding"/>
    <property type="evidence" value="ECO:0007669"/>
    <property type="project" value="UniProtKB-UniRule"/>
</dbReference>
<dbReference type="GO" id="GO:0005524">
    <property type="term" value="F:ATP binding"/>
    <property type="evidence" value="ECO:0007669"/>
    <property type="project" value="UniProtKB-UniRule"/>
</dbReference>
<dbReference type="GO" id="GO:0000287">
    <property type="term" value="F:magnesium ion binding"/>
    <property type="evidence" value="ECO:0007669"/>
    <property type="project" value="UniProtKB-UniRule"/>
</dbReference>
<dbReference type="GO" id="GO:0016783">
    <property type="term" value="F:sulfurtransferase activity"/>
    <property type="evidence" value="ECO:0007669"/>
    <property type="project" value="UniProtKB-UniRule"/>
</dbReference>
<dbReference type="GO" id="GO:0000049">
    <property type="term" value="F:tRNA binding"/>
    <property type="evidence" value="ECO:0007669"/>
    <property type="project" value="UniProtKB-KW"/>
</dbReference>
<dbReference type="GO" id="GO:0034227">
    <property type="term" value="P:tRNA thio-modification"/>
    <property type="evidence" value="ECO:0007669"/>
    <property type="project" value="UniProtKB-UniRule"/>
</dbReference>
<dbReference type="CDD" id="cd24138">
    <property type="entry name" value="TtcA-like"/>
    <property type="match status" value="1"/>
</dbReference>
<dbReference type="FunFam" id="3.40.50.620:FF:000046">
    <property type="entry name" value="tRNA-cytidine(32) 2-sulfurtransferase"/>
    <property type="match status" value="1"/>
</dbReference>
<dbReference type="Gene3D" id="3.40.50.620">
    <property type="entry name" value="HUPs"/>
    <property type="match status" value="1"/>
</dbReference>
<dbReference type="HAMAP" id="MF_01850">
    <property type="entry name" value="TtcA"/>
    <property type="match status" value="1"/>
</dbReference>
<dbReference type="InterPro" id="IPR014729">
    <property type="entry name" value="Rossmann-like_a/b/a_fold"/>
</dbReference>
<dbReference type="InterPro" id="IPR011063">
    <property type="entry name" value="TilS/TtcA_N"/>
</dbReference>
<dbReference type="InterPro" id="IPR012089">
    <property type="entry name" value="tRNA_Cyd_32_2_STrfase"/>
</dbReference>
<dbReference type="InterPro" id="IPR035107">
    <property type="entry name" value="tRNA_thiolation_TtcA_Ctu1"/>
</dbReference>
<dbReference type="NCBIfam" id="NF007972">
    <property type="entry name" value="PRK10696.1"/>
    <property type="match status" value="1"/>
</dbReference>
<dbReference type="PANTHER" id="PTHR43686:SF1">
    <property type="entry name" value="AMINOTRAN_5 DOMAIN-CONTAINING PROTEIN"/>
    <property type="match status" value="1"/>
</dbReference>
<dbReference type="PANTHER" id="PTHR43686">
    <property type="entry name" value="SULFURTRANSFERASE-RELATED"/>
    <property type="match status" value="1"/>
</dbReference>
<dbReference type="Pfam" id="PF01171">
    <property type="entry name" value="ATP_bind_3"/>
    <property type="match status" value="1"/>
</dbReference>
<dbReference type="PIRSF" id="PIRSF004976">
    <property type="entry name" value="ATPase_YdaO"/>
    <property type="match status" value="1"/>
</dbReference>
<dbReference type="SUPFAM" id="SSF52402">
    <property type="entry name" value="Adenine nucleotide alpha hydrolases-like"/>
    <property type="match status" value="1"/>
</dbReference>
<feature type="chain" id="PRO_0000348714" description="tRNA-cytidine(32) 2-sulfurtransferase">
    <location>
        <begin position="1"/>
        <end position="310"/>
    </location>
</feature>
<feature type="short sequence motif" description="PP-loop motif" evidence="1">
    <location>
        <begin position="47"/>
        <end position="52"/>
    </location>
</feature>
<feature type="binding site" evidence="1">
    <location>
        <position position="122"/>
    </location>
    <ligand>
        <name>[4Fe-4S] cluster</name>
        <dbReference type="ChEBI" id="CHEBI:49883"/>
    </ligand>
</feature>
<feature type="binding site" evidence="1">
    <location>
        <position position="125"/>
    </location>
    <ligand>
        <name>[4Fe-4S] cluster</name>
        <dbReference type="ChEBI" id="CHEBI:49883"/>
    </ligand>
</feature>
<feature type="binding site" evidence="1">
    <location>
        <position position="213"/>
    </location>
    <ligand>
        <name>[4Fe-4S] cluster</name>
        <dbReference type="ChEBI" id="CHEBI:49883"/>
    </ligand>
</feature>
<evidence type="ECO:0000255" key="1">
    <source>
        <dbReference type="HAMAP-Rule" id="MF_01850"/>
    </source>
</evidence>
<comment type="function">
    <text evidence="1">Catalyzes the ATP-dependent 2-thiolation of cytidine in position 32 of tRNA, to form 2-thiocytidine (s(2)C32). The sulfur atoms are provided by the cysteine/cysteine desulfurase (IscS) system.</text>
</comment>
<comment type="catalytic activity">
    <reaction evidence="1">
        <text>cytidine(32) in tRNA + S-sulfanyl-L-cysteinyl-[cysteine desulfurase] + AH2 + ATP = 2-thiocytidine(32) in tRNA + L-cysteinyl-[cysteine desulfurase] + A + AMP + diphosphate + H(+)</text>
        <dbReference type="Rhea" id="RHEA:57048"/>
        <dbReference type="Rhea" id="RHEA-COMP:10288"/>
        <dbReference type="Rhea" id="RHEA-COMP:12157"/>
        <dbReference type="Rhea" id="RHEA-COMP:12158"/>
        <dbReference type="Rhea" id="RHEA-COMP:14821"/>
        <dbReference type="ChEBI" id="CHEBI:13193"/>
        <dbReference type="ChEBI" id="CHEBI:15378"/>
        <dbReference type="ChEBI" id="CHEBI:17499"/>
        <dbReference type="ChEBI" id="CHEBI:29950"/>
        <dbReference type="ChEBI" id="CHEBI:30616"/>
        <dbReference type="ChEBI" id="CHEBI:33019"/>
        <dbReference type="ChEBI" id="CHEBI:61963"/>
        <dbReference type="ChEBI" id="CHEBI:82748"/>
        <dbReference type="ChEBI" id="CHEBI:141453"/>
        <dbReference type="ChEBI" id="CHEBI:456215"/>
    </reaction>
    <physiologicalReaction direction="left-to-right" evidence="1">
        <dbReference type="Rhea" id="RHEA:57049"/>
    </physiologicalReaction>
</comment>
<comment type="cofactor">
    <cofactor evidence="1">
        <name>Mg(2+)</name>
        <dbReference type="ChEBI" id="CHEBI:18420"/>
    </cofactor>
</comment>
<comment type="cofactor">
    <cofactor evidence="1">
        <name>[4Fe-4S] cluster</name>
        <dbReference type="ChEBI" id="CHEBI:49883"/>
    </cofactor>
    <text evidence="1">Binds 1 [4Fe-4S] cluster per subunit. The cluster is chelated by three Cys residues, the fourth Fe has a free coordination site that may bind a sulfur atom transferred from the persulfide of IscS.</text>
</comment>
<comment type="pathway">
    <text evidence="1">tRNA modification.</text>
</comment>
<comment type="subunit">
    <text evidence="1">Homodimer.</text>
</comment>
<comment type="subcellular location">
    <subcellularLocation>
        <location evidence="1">Cytoplasm</location>
    </subcellularLocation>
</comment>
<comment type="miscellaneous">
    <text evidence="1">The thiolation reaction likely consists of two steps: a first activation step by ATP to form an adenylated intermediate of the target base of tRNA, and a second nucleophilic substitution step of the sulfur (S) atom supplied by the hydrosulfide attached to the Fe-S cluster.</text>
</comment>
<comment type="similarity">
    <text evidence="1">Belongs to the TtcA family.</text>
</comment>
<sequence length="310" mass="35223">MSEIQEISKKEQYNLNKLQKRLRRNVGEAIADYNMIEEGDRIMVCLSGGKDSYTMLEILRNLQQSAPVNFSLVAVNLDQKQPGFPEHILPEYLSSLGVEYKIVEENTYGIVKEKIPEGKTTCSLCSRLRRGILYRTATELGATKIALGHHRDDILQTLFLNMFYGGKMKGMPPKLMSDDGKHIVIRPLAYCREKDIERFSQAKGFPIIPCNLCGSQPNLQRQVIADMLRDWDKRYPGRIETMFSAMQNVVPSHLCDTELFDFKGIHHGSEVVNGGDLAFDREEIPMMPAGWTPEDDAAPPMQRLDVLEIK</sequence>
<gene>
    <name evidence="1" type="primary">ttcA</name>
    <name type="ordered locus">ESA_01675</name>
</gene>
<proteinExistence type="inferred from homology"/>
<reference key="1">
    <citation type="journal article" date="2010" name="PLoS ONE">
        <title>Genome sequence of Cronobacter sakazakii BAA-894 and comparative genomic hybridization analysis with other Cronobacter species.</title>
        <authorList>
            <person name="Kucerova E."/>
            <person name="Clifton S.W."/>
            <person name="Xia X.Q."/>
            <person name="Long F."/>
            <person name="Porwollik S."/>
            <person name="Fulton L."/>
            <person name="Fronick C."/>
            <person name="Minx P."/>
            <person name="Kyung K."/>
            <person name="Warren W."/>
            <person name="Fulton R."/>
            <person name="Feng D."/>
            <person name="Wollam A."/>
            <person name="Shah N."/>
            <person name="Bhonagiri V."/>
            <person name="Nash W.E."/>
            <person name="Hallsworth-Pepin K."/>
            <person name="Wilson R.K."/>
            <person name="McClelland M."/>
            <person name="Forsythe S.J."/>
        </authorList>
    </citation>
    <scope>NUCLEOTIDE SEQUENCE [LARGE SCALE GENOMIC DNA]</scope>
    <source>
        <strain>ATCC BAA-894</strain>
    </source>
</reference>
<organism>
    <name type="scientific">Cronobacter sakazakii (strain ATCC BAA-894)</name>
    <name type="common">Enterobacter sakazakii</name>
    <dbReference type="NCBI Taxonomy" id="290339"/>
    <lineage>
        <taxon>Bacteria</taxon>
        <taxon>Pseudomonadati</taxon>
        <taxon>Pseudomonadota</taxon>
        <taxon>Gammaproteobacteria</taxon>
        <taxon>Enterobacterales</taxon>
        <taxon>Enterobacteriaceae</taxon>
        <taxon>Cronobacter</taxon>
    </lineage>
</organism>
<keyword id="KW-0004">4Fe-4S</keyword>
<keyword id="KW-0067">ATP-binding</keyword>
<keyword id="KW-0963">Cytoplasm</keyword>
<keyword id="KW-0408">Iron</keyword>
<keyword id="KW-0411">Iron-sulfur</keyword>
<keyword id="KW-0460">Magnesium</keyword>
<keyword id="KW-0479">Metal-binding</keyword>
<keyword id="KW-0547">Nucleotide-binding</keyword>
<keyword id="KW-1185">Reference proteome</keyword>
<keyword id="KW-0694">RNA-binding</keyword>
<keyword id="KW-0808">Transferase</keyword>
<keyword id="KW-0819">tRNA processing</keyword>
<keyword id="KW-0820">tRNA-binding</keyword>
<accession>A7MLI7</accession>